<dbReference type="EMBL" id="CP001102">
    <property type="protein sequence ID" value="ACE05469.1"/>
    <property type="molecule type" value="Genomic_DNA"/>
</dbReference>
<dbReference type="RefSeq" id="WP_012472241.1">
    <property type="nucleotide sequence ID" value="NC_010830.1"/>
</dbReference>
<dbReference type="SMR" id="B3EU50"/>
<dbReference type="STRING" id="452471.Aasi_0012"/>
<dbReference type="KEGG" id="aas:Aasi_0012"/>
<dbReference type="eggNOG" id="COG0184">
    <property type="taxonomic scope" value="Bacteria"/>
</dbReference>
<dbReference type="HOGENOM" id="CLU_148518_0_1_10"/>
<dbReference type="OrthoDB" id="9799262at2"/>
<dbReference type="Proteomes" id="UP000001227">
    <property type="component" value="Chromosome"/>
</dbReference>
<dbReference type="GO" id="GO:0022627">
    <property type="term" value="C:cytosolic small ribosomal subunit"/>
    <property type="evidence" value="ECO:0007669"/>
    <property type="project" value="TreeGrafter"/>
</dbReference>
<dbReference type="GO" id="GO:0019843">
    <property type="term" value="F:rRNA binding"/>
    <property type="evidence" value="ECO:0007669"/>
    <property type="project" value="UniProtKB-UniRule"/>
</dbReference>
<dbReference type="GO" id="GO:0003735">
    <property type="term" value="F:structural constituent of ribosome"/>
    <property type="evidence" value="ECO:0007669"/>
    <property type="project" value="InterPro"/>
</dbReference>
<dbReference type="GO" id="GO:0006412">
    <property type="term" value="P:translation"/>
    <property type="evidence" value="ECO:0007669"/>
    <property type="project" value="UniProtKB-UniRule"/>
</dbReference>
<dbReference type="CDD" id="cd00353">
    <property type="entry name" value="Ribosomal_S15p_S13e"/>
    <property type="match status" value="1"/>
</dbReference>
<dbReference type="Gene3D" id="6.10.250.3130">
    <property type="match status" value="1"/>
</dbReference>
<dbReference type="Gene3D" id="1.10.287.10">
    <property type="entry name" value="S15/NS1, RNA-binding"/>
    <property type="match status" value="1"/>
</dbReference>
<dbReference type="HAMAP" id="MF_01343_B">
    <property type="entry name" value="Ribosomal_uS15_B"/>
    <property type="match status" value="1"/>
</dbReference>
<dbReference type="InterPro" id="IPR000589">
    <property type="entry name" value="Ribosomal_uS15"/>
</dbReference>
<dbReference type="InterPro" id="IPR005290">
    <property type="entry name" value="Ribosomal_uS15_bac-type"/>
</dbReference>
<dbReference type="InterPro" id="IPR009068">
    <property type="entry name" value="uS15_NS1_RNA-bd_sf"/>
</dbReference>
<dbReference type="NCBIfam" id="TIGR00952">
    <property type="entry name" value="S15_bact"/>
    <property type="match status" value="1"/>
</dbReference>
<dbReference type="PANTHER" id="PTHR23321">
    <property type="entry name" value="RIBOSOMAL PROTEIN S15, BACTERIAL AND ORGANELLAR"/>
    <property type="match status" value="1"/>
</dbReference>
<dbReference type="PANTHER" id="PTHR23321:SF26">
    <property type="entry name" value="SMALL RIBOSOMAL SUBUNIT PROTEIN US15M"/>
    <property type="match status" value="1"/>
</dbReference>
<dbReference type="Pfam" id="PF00312">
    <property type="entry name" value="Ribosomal_S15"/>
    <property type="match status" value="1"/>
</dbReference>
<dbReference type="SMART" id="SM01387">
    <property type="entry name" value="Ribosomal_S15"/>
    <property type="match status" value="1"/>
</dbReference>
<dbReference type="SUPFAM" id="SSF47060">
    <property type="entry name" value="S15/NS1 RNA-binding domain"/>
    <property type="match status" value="1"/>
</dbReference>
<name>RS15_AMOA5</name>
<evidence type="ECO:0000255" key="1">
    <source>
        <dbReference type="HAMAP-Rule" id="MF_01343"/>
    </source>
</evidence>
<evidence type="ECO:0000305" key="2"/>
<organism>
    <name type="scientific">Amoebophilus asiaticus (strain 5a2)</name>
    <dbReference type="NCBI Taxonomy" id="452471"/>
    <lineage>
        <taxon>Bacteria</taxon>
        <taxon>Pseudomonadati</taxon>
        <taxon>Bacteroidota</taxon>
        <taxon>Cytophagia</taxon>
        <taxon>Cytophagales</taxon>
        <taxon>Amoebophilaceae</taxon>
        <taxon>Candidatus Amoebophilus</taxon>
    </lineage>
</organism>
<protein>
    <recommendedName>
        <fullName evidence="1">Small ribosomal subunit protein uS15</fullName>
    </recommendedName>
    <alternativeName>
        <fullName evidence="2">30S ribosomal protein S15</fullName>
    </alternativeName>
</protein>
<accession>B3EU50</accession>
<feature type="chain" id="PRO_1000143069" description="Small ribosomal subunit protein uS15">
    <location>
        <begin position="1"/>
        <end position="91"/>
    </location>
</feature>
<proteinExistence type="inferred from homology"/>
<comment type="function">
    <text evidence="1">One of the primary rRNA binding proteins, it binds directly to 16S rRNA where it helps nucleate assembly of the platform of the 30S subunit by binding and bridging several RNA helices of the 16S rRNA.</text>
</comment>
<comment type="function">
    <text evidence="1">Forms an intersubunit bridge (bridge B4) with the 23S rRNA of the 50S subunit in the ribosome.</text>
</comment>
<comment type="subunit">
    <text evidence="1">Part of the 30S ribosomal subunit. Forms a bridge to the 50S subunit in the 70S ribosome, contacting the 23S rRNA.</text>
</comment>
<comment type="similarity">
    <text evidence="1">Belongs to the universal ribosomal protein uS15 family.</text>
</comment>
<keyword id="KW-1185">Reference proteome</keyword>
<keyword id="KW-0687">Ribonucleoprotein</keyword>
<keyword id="KW-0689">Ribosomal protein</keyword>
<keyword id="KW-0694">RNA-binding</keyword>
<keyword id="KW-0699">rRNA-binding</keyword>
<sequence>MALNKEDKKDIFLTYSAKNVAQDTGSPESQIALFSNRITYLTEHLKQYPKDKASRLGLIKLVGKRKKQLTYLQNTAIERYRDIIVKLGIRK</sequence>
<gene>
    <name evidence="1" type="primary">rpsO</name>
    <name type="ordered locus">Aasi_0012</name>
</gene>
<reference key="1">
    <citation type="journal article" date="2010" name="J. Bacteriol.">
        <title>The genome of the amoeba symbiont 'Candidatus Amoebophilus asiaticus' reveals common mechanisms for host cell interaction among amoeba-associated bacteria.</title>
        <authorList>
            <person name="Schmitz-Esser S."/>
            <person name="Tischler P."/>
            <person name="Arnold R."/>
            <person name="Montanaro J."/>
            <person name="Wagner M."/>
            <person name="Rattei T."/>
            <person name="Horn M."/>
        </authorList>
    </citation>
    <scope>NUCLEOTIDE SEQUENCE [LARGE SCALE GENOMIC DNA]</scope>
    <source>
        <strain>5a2</strain>
    </source>
</reference>